<gene>
    <name evidence="1" type="primary">bioB</name>
    <name type="ordered locus">BUAP5A_286</name>
</gene>
<evidence type="ECO:0000255" key="1">
    <source>
        <dbReference type="HAMAP-Rule" id="MF_01694"/>
    </source>
</evidence>
<evidence type="ECO:0000255" key="2">
    <source>
        <dbReference type="PROSITE-ProRule" id="PRU01266"/>
    </source>
</evidence>
<keyword id="KW-0001">2Fe-2S</keyword>
<keyword id="KW-0004">4Fe-4S</keyword>
<keyword id="KW-0093">Biotin biosynthesis</keyword>
<keyword id="KW-0408">Iron</keyword>
<keyword id="KW-0411">Iron-sulfur</keyword>
<keyword id="KW-0479">Metal-binding</keyword>
<keyword id="KW-0949">S-adenosyl-L-methionine</keyword>
<keyword id="KW-0808">Transferase</keyword>
<reference key="1">
    <citation type="journal article" date="2009" name="Science">
        <title>The dynamics and time scale of ongoing genomic erosion in symbiotic bacteria.</title>
        <authorList>
            <person name="Moran N.A."/>
            <person name="McLaughlin H.J."/>
            <person name="Sorek R."/>
        </authorList>
    </citation>
    <scope>NUCLEOTIDE SEQUENCE [LARGE SCALE GENOMIC DNA]</scope>
    <source>
        <strain>5A</strain>
    </source>
</reference>
<proteinExistence type="inferred from homology"/>
<protein>
    <recommendedName>
        <fullName evidence="1">Biotin synthase</fullName>
        <ecNumber evidence="1">2.8.1.6</ecNumber>
    </recommendedName>
</protein>
<dbReference type="EC" id="2.8.1.6" evidence="1"/>
<dbReference type="EMBL" id="CP001161">
    <property type="protein sequence ID" value="ACL30654.1"/>
    <property type="molecule type" value="Genomic_DNA"/>
</dbReference>
<dbReference type="RefSeq" id="WP_009874245.1">
    <property type="nucleotide sequence ID" value="NC_011833.1"/>
</dbReference>
<dbReference type="SMR" id="B8D983"/>
<dbReference type="KEGG" id="bap:BUAP5A_286"/>
<dbReference type="HOGENOM" id="CLU_033172_1_2_6"/>
<dbReference type="OrthoDB" id="9786826at2"/>
<dbReference type="UniPathway" id="UPA00078">
    <property type="reaction ID" value="UER00162"/>
</dbReference>
<dbReference type="Proteomes" id="UP000006904">
    <property type="component" value="Chromosome"/>
</dbReference>
<dbReference type="GO" id="GO:0051537">
    <property type="term" value="F:2 iron, 2 sulfur cluster binding"/>
    <property type="evidence" value="ECO:0007669"/>
    <property type="project" value="UniProtKB-KW"/>
</dbReference>
<dbReference type="GO" id="GO:0051539">
    <property type="term" value="F:4 iron, 4 sulfur cluster binding"/>
    <property type="evidence" value="ECO:0007669"/>
    <property type="project" value="UniProtKB-KW"/>
</dbReference>
<dbReference type="GO" id="GO:0004076">
    <property type="term" value="F:biotin synthase activity"/>
    <property type="evidence" value="ECO:0007669"/>
    <property type="project" value="UniProtKB-UniRule"/>
</dbReference>
<dbReference type="GO" id="GO:0005506">
    <property type="term" value="F:iron ion binding"/>
    <property type="evidence" value="ECO:0007669"/>
    <property type="project" value="UniProtKB-UniRule"/>
</dbReference>
<dbReference type="GO" id="GO:0009102">
    <property type="term" value="P:biotin biosynthetic process"/>
    <property type="evidence" value="ECO:0007669"/>
    <property type="project" value="UniProtKB-UniRule"/>
</dbReference>
<dbReference type="CDD" id="cd01335">
    <property type="entry name" value="Radical_SAM"/>
    <property type="match status" value="1"/>
</dbReference>
<dbReference type="FunFam" id="3.20.20.70:FF:000011">
    <property type="entry name" value="Biotin synthase"/>
    <property type="match status" value="1"/>
</dbReference>
<dbReference type="Gene3D" id="3.20.20.70">
    <property type="entry name" value="Aldolase class I"/>
    <property type="match status" value="1"/>
</dbReference>
<dbReference type="HAMAP" id="MF_01694">
    <property type="entry name" value="BioB"/>
    <property type="match status" value="1"/>
</dbReference>
<dbReference type="InterPro" id="IPR013785">
    <property type="entry name" value="Aldolase_TIM"/>
</dbReference>
<dbReference type="InterPro" id="IPR010722">
    <property type="entry name" value="BATS_dom"/>
</dbReference>
<dbReference type="InterPro" id="IPR002684">
    <property type="entry name" value="Biotin_synth/BioAB"/>
</dbReference>
<dbReference type="InterPro" id="IPR024177">
    <property type="entry name" value="Biotin_synthase"/>
</dbReference>
<dbReference type="InterPro" id="IPR006638">
    <property type="entry name" value="Elp3/MiaA/NifB-like_rSAM"/>
</dbReference>
<dbReference type="InterPro" id="IPR007197">
    <property type="entry name" value="rSAM"/>
</dbReference>
<dbReference type="NCBIfam" id="TIGR00433">
    <property type="entry name" value="bioB"/>
    <property type="match status" value="1"/>
</dbReference>
<dbReference type="PANTHER" id="PTHR22976">
    <property type="entry name" value="BIOTIN SYNTHASE"/>
    <property type="match status" value="1"/>
</dbReference>
<dbReference type="PANTHER" id="PTHR22976:SF2">
    <property type="entry name" value="BIOTIN SYNTHASE, MITOCHONDRIAL"/>
    <property type="match status" value="1"/>
</dbReference>
<dbReference type="Pfam" id="PF06968">
    <property type="entry name" value="BATS"/>
    <property type="match status" value="1"/>
</dbReference>
<dbReference type="Pfam" id="PF04055">
    <property type="entry name" value="Radical_SAM"/>
    <property type="match status" value="1"/>
</dbReference>
<dbReference type="PIRSF" id="PIRSF001619">
    <property type="entry name" value="Biotin_synth"/>
    <property type="match status" value="1"/>
</dbReference>
<dbReference type="SFLD" id="SFLDF00272">
    <property type="entry name" value="biotin_synthase"/>
    <property type="match status" value="1"/>
</dbReference>
<dbReference type="SFLD" id="SFLDG01278">
    <property type="entry name" value="biotin_synthase_like"/>
    <property type="match status" value="1"/>
</dbReference>
<dbReference type="SMART" id="SM00876">
    <property type="entry name" value="BATS"/>
    <property type="match status" value="1"/>
</dbReference>
<dbReference type="SMART" id="SM00729">
    <property type="entry name" value="Elp3"/>
    <property type="match status" value="1"/>
</dbReference>
<dbReference type="SUPFAM" id="SSF102114">
    <property type="entry name" value="Radical SAM enzymes"/>
    <property type="match status" value="1"/>
</dbReference>
<dbReference type="PROSITE" id="PS51918">
    <property type="entry name" value="RADICAL_SAM"/>
    <property type="match status" value="1"/>
</dbReference>
<organism>
    <name type="scientific">Buchnera aphidicola subsp. Acyrthosiphon pisum (strain 5A)</name>
    <dbReference type="NCBI Taxonomy" id="563178"/>
    <lineage>
        <taxon>Bacteria</taxon>
        <taxon>Pseudomonadati</taxon>
        <taxon>Pseudomonadota</taxon>
        <taxon>Gammaproteobacteria</taxon>
        <taxon>Enterobacterales</taxon>
        <taxon>Erwiniaceae</taxon>
        <taxon>Buchnera</taxon>
    </lineage>
</organism>
<accession>B8D983</accession>
<comment type="function">
    <text evidence="1">Catalyzes the conversion of dethiobiotin (DTB) to biotin by the insertion of a sulfur atom into dethiobiotin via a radical-based mechanism.</text>
</comment>
<comment type="catalytic activity">
    <reaction evidence="1">
        <text>(4R,5S)-dethiobiotin + (sulfur carrier)-SH + 2 reduced [2Fe-2S]-[ferredoxin] + 2 S-adenosyl-L-methionine = (sulfur carrier)-H + biotin + 2 5'-deoxyadenosine + 2 L-methionine + 2 oxidized [2Fe-2S]-[ferredoxin]</text>
        <dbReference type="Rhea" id="RHEA:22060"/>
        <dbReference type="Rhea" id="RHEA-COMP:10000"/>
        <dbReference type="Rhea" id="RHEA-COMP:10001"/>
        <dbReference type="Rhea" id="RHEA-COMP:14737"/>
        <dbReference type="Rhea" id="RHEA-COMP:14739"/>
        <dbReference type="ChEBI" id="CHEBI:17319"/>
        <dbReference type="ChEBI" id="CHEBI:29917"/>
        <dbReference type="ChEBI" id="CHEBI:33737"/>
        <dbReference type="ChEBI" id="CHEBI:33738"/>
        <dbReference type="ChEBI" id="CHEBI:57586"/>
        <dbReference type="ChEBI" id="CHEBI:57844"/>
        <dbReference type="ChEBI" id="CHEBI:59789"/>
        <dbReference type="ChEBI" id="CHEBI:64428"/>
        <dbReference type="ChEBI" id="CHEBI:149473"/>
        <dbReference type="EC" id="2.8.1.6"/>
    </reaction>
</comment>
<comment type="cofactor">
    <cofactor evidence="1">
        <name>[4Fe-4S] cluster</name>
        <dbReference type="ChEBI" id="CHEBI:49883"/>
    </cofactor>
    <text evidence="1">Binds 1 [4Fe-4S] cluster. The cluster is coordinated with 3 cysteines and an exchangeable S-adenosyl-L-methionine.</text>
</comment>
<comment type="cofactor">
    <cofactor evidence="1">
        <name>[2Fe-2S] cluster</name>
        <dbReference type="ChEBI" id="CHEBI:190135"/>
    </cofactor>
    <text evidence="1">Binds 1 [2Fe-2S] cluster. The cluster is coordinated with 3 cysteines and 1 arginine.</text>
</comment>
<comment type="pathway">
    <text evidence="1">Cofactor biosynthesis; biotin biosynthesis; biotin from 7,8-diaminononanoate: step 2/2.</text>
</comment>
<comment type="subunit">
    <text evidence="1">Homodimer.</text>
</comment>
<comment type="similarity">
    <text evidence="1">Belongs to the radical SAM superfamily. Biotin synthase family.</text>
</comment>
<feature type="chain" id="PRO_0000381256" description="Biotin synthase">
    <location>
        <begin position="1"/>
        <end position="343"/>
    </location>
</feature>
<feature type="domain" description="Radical SAM core" evidence="2">
    <location>
        <begin position="36"/>
        <end position="254"/>
    </location>
</feature>
<feature type="binding site" evidence="1">
    <location>
        <position position="51"/>
    </location>
    <ligand>
        <name>[4Fe-4S] cluster</name>
        <dbReference type="ChEBI" id="CHEBI:49883"/>
        <note>4Fe-4S-S-AdoMet</note>
    </ligand>
</feature>
<feature type="binding site" evidence="1">
    <location>
        <position position="55"/>
    </location>
    <ligand>
        <name>[4Fe-4S] cluster</name>
        <dbReference type="ChEBI" id="CHEBI:49883"/>
        <note>4Fe-4S-S-AdoMet</note>
    </ligand>
</feature>
<feature type="binding site" evidence="1">
    <location>
        <position position="58"/>
    </location>
    <ligand>
        <name>[4Fe-4S] cluster</name>
        <dbReference type="ChEBI" id="CHEBI:49883"/>
        <note>4Fe-4S-S-AdoMet</note>
    </ligand>
</feature>
<feature type="binding site" evidence="1">
    <location>
        <position position="95"/>
    </location>
    <ligand>
        <name>[2Fe-2S] cluster</name>
        <dbReference type="ChEBI" id="CHEBI:190135"/>
    </ligand>
</feature>
<feature type="binding site" evidence="1">
    <location>
        <position position="126"/>
    </location>
    <ligand>
        <name>[2Fe-2S] cluster</name>
        <dbReference type="ChEBI" id="CHEBI:190135"/>
    </ligand>
</feature>
<feature type="binding site" evidence="1">
    <location>
        <position position="186"/>
    </location>
    <ligand>
        <name>[2Fe-2S] cluster</name>
        <dbReference type="ChEBI" id="CHEBI:190135"/>
    </ligand>
</feature>
<feature type="binding site" evidence="1">
    <location>
        <position position="258"/>
    </location>
    <ligand>
        <name>[2Fe-2S] cluster</name>
        <dbReference type="ChEBI" id="CHEBI:190135"/>
    </ligand>
</feature>
<name>BIOB_BUCA5</name>
<sequence>MKKKWTLEETKMLFKKPFFNLMFQAQEEHRKNFDPNTIQISTLLSIKTGSCPEDCKYCPQSSRYKTGLKKEPLLEIEQILSAAKKAKDSGSSRFCMGAAWKNPKEKDMPYLEKIIKKIKEMGMETCMTLGTLNSTQAKKLADAGLDFYNHNLDTSKNFYSNIITTRTYQERLHTLHAVRSSGMKVCSGGIIGLGEKKQDRIELLIELSNLSIQPESVPINMLVKIPGTPMADNKDVEPFDFIRIIAVARIMMPKSYIRLSAGRHKMNDQTQAMCFMAGANSIFYGCKLLTSDNPEEKHDLELFKKLDLIPENKTQTLLKEDEYKTIIKSSKIKKDQYYNAAII</sequence>